<proteinExistence type="evidence at protein level"/>
<evidence type="ECO:0000250" key="1">
    <source>
        <dbReference type="UniProtKB" id="P14418"/>
    </source>
</evidence>
<evidence type="ECO:0000255" key="2"/>
<evidence type="ECO:0000255" key="3">
    <source>
        <dbReference type="PROSITE-ProRule" id="PRU10035"/>
    </source>
</evidence>
<evidence type="ECO:0000255" key="4">
    <source>
        <dbReference type="PROSITE-ProRule" id="PRU10036"/>
    </source>
</evidence>
<evidence type="ECO:0000269" key="5">
    <source>
    </source>
</evidence>
<evidence type="ECO:0000269" key="6">
    <source>
    </source>
</evidence>
<evidence type="ECO:0000305" key="7"/>
<evidence type="ECO:0007744" key="8">
    <source>
        <dbReference type="PDB" id="1GP7"/>
    </source>
</evidence>
<evidence type="ECO:0007829" key="9">
    <source>
        <dbReference type="PDB" id="1GP7"/>
    </source>
</evidence>
<accession>P80966</accession>
<accession>Q9DF32</accession>
<organism>
    <name type="scientific">Ophiophagus hannah</name>
    <name type="common">King cobra</name>
    <name type="synonym">Naja hannah</name>
    <dbReference type="NCBI Taxonomy" id="8665"/>
    <lineage>
        <taxon>Eukaryota</taxon>
        <taxon>Metazoa</taxon>
        <taxon>Chordata</taxon>
        <taxon>Craniata</taxon>
        <taxon>Vertebrata</taxon>
        <taxon>Euteleostomi</taxon>
        <taxon>Lepidosauria</taxon>
        <taxon>Squamata</taxon>
        <taxon>Bifurcata</taxon>
        <taxon>Unidentata</taxon>
        <taxon>Episquamata</taxon>
        <taxon>Toxicofera</taxon>
        <taxon>Serpentes</taxon>
        <taxon>Colubroidea</taxon>
        <taxon>Elapidae</taxon>
        <taxon>Elapinae</taxon>
        <taxon>Ophiophagus</taxon>
    </lineage>
</organism>
<keyword id="KW-0002">3D-structure</keyword>
<keyword id="KW-0106">Calcium</keyword>
<keyword id="KW-0123">Cardiotoxin</keyword>
<keyword id="KW-0903">Direct protein sequencing</keyword>
<keyword id="KW-1015">Disulfide bond</keyword>
<keyword id="KW-1199">Hemostasis impairing toxin</keyword>
<keyword id="KW-0378">Hydrolase</keyword>
<keyword id="KW-0442">Lipid degradation</keyword>
<keyword id="KW-0443">Lipid metabolism</keyword>
<keyword id="KW-0479">Metal-binding</keyword>
<keyword id="KW-0959">Myotoxin</keyword>
<keyword id="KW-1201">Platelet aggregation inhibiting toxin</keyword>
<keyword id="KW-0964">Secreted</keyword>
<keyword id="KW-0732">Signal</keyword>
<keyword id="KW-0800">Toxin</keyword>
<dbReference type="EC" id="3.1.1.4"/>
<dbReference type="EMBL" id="AF302908">
    <property type="protein sequence ID" value="AAG23964.1"/>
    <property type="molecule type" value="mRNA"/>
</dbReference>
<dbReference type="PDB" id="1GP7">
    <property type="method" value="X-ray"/>
    <property type="resolution" value="2.60 A"/>
    <property type="chains" value="A/B/C=1-151"/>
</dbReference>
<dbReference type="PDBsum" id="1GP7"/>
<dbReference type="SMR" id="P80966"/>
<dbReference type="EvolutionaryTrace" id="P80966"/>
<dbReference type="GO" id="GO:0005576">
    <property type="term" value="C:extracellular region"/>
    <property type="evidence" value="ECO:0007669"/>
    <property type="project" value="UniProtKB-SubCell"/>
</dbReference>
<dbReference type="GO" id="GO:0005509">
    <property type="term" value="F:calcium ion binding"/>
    <property type="evidence" value="ECO:0007669"/>
    <property type="project" value="InterPro"/>
</dbReference>
<dbReference type="GO" id="GO:0047498">
    <property type="term" value="F:calcium-dependent phospholipase A2 activity"/>
    <property type="evidence" value="ECO:0007669"/>
    <property type="project" value="TreeGrafter"/>
</dbReference>
<dbReference type="GO" id="GO:0005543">
    <property type="term" value="F:phospholipid binding"/>
    <property type="evidence" value="ECO:0007669"/>
    <property type="project" value="TreeGrafter"/>
</dbReference>
<dbReference type="GO" id="GO:0005102">
    <property type="term" value="F:signaling receptor binding"/>
    <property type="evidence" value="ECO:0007669"/>
    <property type="project" value="TreeGrafter"/>
</dbReference>
<dbReference type="GO" id="GO:0090729">
    <property type="term" value="F:toxin activity"/>
    <property type="evidence" value="ECO:0007669"/>
    <property type="project" value="UniProtKB-KW"/>
</dbReference>
<dbReference type="GO" id="GO:0050482">
    <property type="term" value="P:arachidonate secretion"/>
    <property type="evidence" value="ECO:0007669"/>
    <property type="project" value="InterPro"/>
</dbReference>
<dbReference type="GO" id="GO:0006633">
    <property type="term" value="P:fatty acid biosynthetic process"/>
    <property type="evidence" value="ECO:0007669"/>
    <property type="project" value="TreeGrafter"/>
</dbReference>
<dbReference type="GO" id="GO:0016042">
    <property type="term" value="P:lipid catabolic process"/>
    <property type="evidence" value="ECO:0007669"/>
    <property type="project" value="UniProtKB-KW"/>
</dbReference>
<dbReference type="GO" id="GO:0006644">
    <property type="term" value="P:phospholipid metabolic process"/>
    <property type="evidence" value="ECO:0007669"/>
    <property type="project" value="InterPro"/>
</dbReference>
<dbReference type="GO" id="GO:0048146">
    <property type="term" value="P:positive regulation of fibroblast proliferation"/>
    <property type="evidence" value="ECO:0007669"/>
    <property type="project" value="TreeGrafter"/>
</dbReference>
<dbReference type="CDD" id="cd00125">
    <property type="entry name" value="PLA2c"/>
    <property type="match status" value="1"/>
</dbReference>
<dbReference type="FunFam" id="1.20.90.10:FF:000007">
    <property type="entry name" value="Acidic phospholipase A2"/>
    <property type="match status" value="1"/>
</dbReference>
<dbReference type="Gene3D" id="1.20.90.10">
    <property type="entry name" value="Phospholipase A2 domain"/>
    <property type="match status" value="1"/>
</dbReference>
<dbReference type="InterPro" id="IPR001211">
    <property type="entry name" value="PLipase_A2"/>
</dbReference>
<dbReference type="InterPro" id="IPR033112">
    <property type="entry name" value="PLipase_A2_Asp_AS"/>
</dbReference>
<dbReference type="InterPro" id="IPR016090">
    <property type="entry name" value="PLipase_A2_dom"/>
</dbReference>
<dbReference type="InterPro" id="IPR036444">
    <property type="entry name" value="PLipase_A2_dom_sf"/>
</dbReference>
<dbReference type="InterPro" id="IPR033113">
    <property type="entry name" value="PLipase_A2_His_AS"/>
</dbReference>
<dbReference type="PANTHER" id="PTHR11716:SF94">
    <property type="entry name" value="PHOSPHOLIPASE A2"/>
    <property type="match status" value="1"/>
</dbReference>
<dbReference type="PANTHER" id="PTHR11716">
    <property type="entry name" value="PHOSPHOLIPASE A2 FAMILY MEMBER"/>
    <property type="match status" value="1"/>
</dbReference>
<dbReference type="Pfam" id="PF00068">
    <property type="entry name" value="Phospholip_A2_1"/>
    <property type="match status" value="1"/>
</dbReference>
<dbReference type="PRINTS" id="PR00389">
    <property type="entry name" value="PHPHLIPASEA2"/>
</dbReference>
<dbReference type="SMART" id="SM00085">
    <property type="entry name" value="PA2c"/>
    <property type="match status" value="1"/>
</dbReference>
<dbReference type="SUPFAM" id="SSF48619">
    <property type="entry name" value="Phospholipase A2, PLA2"/>
    <property type="match status" value="1"/>
</dbReference>
<dbReference type="PROSITE" id="PS00119">
    <property type="entry name" value="PA2_ASP"/>
    <property type="match status" value="1"/>
</dbReference>
<dbReference type="PROSITE" id="PS00118">
    <property type="entry name" value="PA2_HIS"/>
    <property type="match status" value="1"/>
</dbReference>
<protein>
    <recommendedName>
        <fullName>Acidic phospholipase A2 1</fullName>
        <shortName>svPLA2</shortName>
        <ecNumber>3.1.1.4</ecNumber>
    </recommendedName>
    <alternativeName>
        <fullName>APLA2-1</fullName>
    </alternativeName>
    <alternativeName>
        <fullName>OHV A-PLA2</fullName>
        <shortName>OHV-APLA2</shortName>
    </alternativeName>
    <alternativeName>
        <fullName>Phosphatidylcholine 2-acylhydrolase</fullName>
    </alternativeName>
</protein>
<sequence>MNPAHLLVLSAVCVSLLGASSIPPQPLHLIQFGNMIQCTVPGFLSWIKYADYGCYCGAGGSGTPVDKLDRCCQVHDNCYTQAQKLPACSSIMDSPYVKIYSYDCSERTVTCKADNDECAAFICNCDRVAAHCFAASPYNNNNYNIDTTTRC</sequence>
<comment type="function">
    <text evidence="6">Snake venom phospholipase A2 (PLA2) that may exhibit cardiotoxicity, myotoxicity, antiplatelet activity, and edema-inducing activity. PLA2 catalyzes the calcium-dependent hydrolysis of the 2-acyl groups in 3-sn-phosphoglycerides.</text>
</comment>
<comment type="catalytic activity">
    <reaction evidence="3 4">
        <text>a 1,2-diacyl-sn-glycero-3-phosphocholine + H2O = a 1-acyl-sn-glycero-3-phosphocholine + a fatty acid + H(+)</text>
        <dbReference type="Rhea" id="RHEA:15801"/>
        <dbReference type="ChEBI" id="CHEBI:15377"/>
        <dbReference type="ChEBI" id="CHEBI:15378"/>
        <dbReference type="ChEBI" id="CHEBI:28868"/>
        <dbReference type="ChEBI" id="CHEBI:57643"/>
        <dbReference type="ChEBI" id="CHEBI:58168"/>
        <dbReference type="EC" id="3.1.1.4"/>
    </reaction>
</comment>
<comment type="cofactor">
    <cofactor evidence="5">
        <name>Ca(2+)</name>
        <dbReference type="ChEBI" id="CHEBI:29108"/>
    </cofactor>
    <text evidence="5">Binds 1 Ca(2+) ion.</text>
</comment>
<comment type="subcellular location">
    <subcellularLocation>
        <location>Secreted</location>
    </subcellularLocation>
</comment>
<comment type="tissue specificity">
    <text>Expressed by the venom gland.</text>
</comment>
<comment type="mass spectrometry"/>
<comment type="similarity">
    <text evidence="7">Belongs to the phospholipase A2 family. Group I subfamily. D49 sub-subfamily.</text>
</comment>
<reference key="1">
    <citation type="submission" date="2000-09" db="EMBL/GenBank/DDBJ databases">
        <title>Cloning and characterization of cDNAs encoding two acidic isoforms of phospholipase A2 in Guangxi king cobra (Ophiophagus hannah).</title>
        <authorList>
            <person name="Wang Q.Y."/>
            <person name="Shu Y.Y."/>
        </authorList>
    </citation>
    <scope>NUCLEOTIDE SEQUENCE [MRNA]</scope>
    <source>
        <tissue>Venom gland</tissue>
    </source>
</reference>
<reference key="2">
    <citation type="journal article" date="1997" name="Arch. Biochem. Biophys.">
        <title>Complete amino acid sequence of an acidic, cardiotoxic phospholipase A2 from the venom of Ophiophagus hannah (King Cobra): a novel cobra venom enzyme with 'pancreatic loop'.</title>
        <authorList>
            <person name="Huang M.Z."/>
            <person name="Gopalakrishnakone P."/>
            <person name="Chung M.C.M."/>
            <person name="Kini R.M."/>
        </authorList>
    </citation>
    <scope>PROTEIN SEQUENCE OF 28-151</scope>
    <scope>FUNCTION</scope>
    <scope>MASS SPECTROMETRY</scope>
    <source>
        <tissue>Venom</tissue>
    </source>
</reference>
<reference key="3">
    <citation type="journal article" date="2002" name="J. Struct. Biol.">
        <title>Structure of a cardiotoxic phospholipase A(2) from Ophiophagus hannah with the 'pancreatic loop'.</title>
        <authorList>
            <person name="Zhang H.L."/>
            <person name="Xu S.J."/>
            <person name="Wang Q.Y."/>
            <person name="Song S.Y."/>
            <person name="Shu Y.Y."/>
            <person name="Lin Z.J."/>
        </authorList>
    </citation>
    <scope>X-RAY CRYSTALLOGRAPHY (2.6 ANGSTROMS) IN COMPLEX WITH CALCIUM ION</scope>
    <scope>COFACTOR</scope>
    <scope>DISULFIDE BONDS</scope>
</reference>
<name>PA2A1_OPHHA</name>
<feature type="signal peptide" evidence="2">
    <location>
        <begin position="1"/>
        <end position="21"/>
    </location>
</feature>
<feature type="propeptide" id="PRO_0000022942" evidence="6">
    <location>
        <begin position="22"/>
        <end position="27"/>
    </location>
</feature>
<feature type="chain" id="PRO_0000022943" description="Acidic phospholipase A2 1">
    <location>
        <begin position="28"/>
        <end position="151"/>
    </location>
</feature>
<feature type="active site" evidence="1">
    <location>
        <position position="75"/>
    </location>
</feature>
<feature type="active site" evidence="1">
    <location>
        <position position="126"/>
    </location>
</feature>
<feature type="binding site" evidence="5 8">
    <location>
        <position position="55"/>
    </location>
    <ligand>
        <name>Ca(2+)</name>
        <dbReference type="ChEBI" id="CHEBI:29108"/>
    </ligand>
</feature>
<feature type="binding site" evidence="5 8">
    <location>
        <position position="57"/>
    </location>
    <ligand>
        <name>Ca(2+)</name>
        <dbReference type="ChEBI" id="CHEBI:29108"/>
    </ligand>
</feature>
<feature type="binding site" evidence="5 8">
    <location>
        <position position="59"/>
    </location>
    <ligand>
        <name>Ca(2+)</name>
        <dbReference type="ChEBI" id="CHEBI:29108"/>
    </ligand>
</feature>
<feature type="binding site" evidence="5 8">
    <location>
        <position position="76"/>
    </location>
    <ligand>
        <name>Ca(2+)</name>
        <dbReference type="ChEBI" id="CHEBI:29108"/>
    </ligand>
</feature>
<feature type="disulfide bond" evidence="5 8">
    <location>
        <begin position="38"/>
        <end position="104"/>
    </location>
</feature>
<feature type="disulfide bond" evidence="5 8">
    <location>
        <begin position="54"/>
        <end position="151"/>
    </location>
</feature>
<feature type="disulfide bond" evidence="5 8">
    <location>
        <begin position="56"/>
        <end position="72"/>
    </location>
</feature>
<feature type="disulfide bond" evidence="5 8">
    <location>
        <begin position="71"/>
        <end position="132"/>
    </location>
</feature>
<feature type="disulfide bond" evidence="5 8">
    <location>
        <begin position="78"/>
        <end position="125"/>
    </location>
</feature>
<feature type="disulfide bond" evidence="5 8">
    <location>
        <begin position="88"/>
        <end position="118"/>
    </location>
</feature>
<feature type="disulfide bond" evidence="5 8">
    <location>
        <begin position="111"/>
        <end position="123"/>
    </location>
</feature>
<feature type="helix" evidence="9">
    <location>
        <begin position="29"/>
        <end position="39"/>
    </location>
</feature>
<feature type="helix" evidence="9">
    <location>
        <begin position="46"/>
        <end position="49"/>
    </location>
</feature>
<feature type="turn" evidence="9">
    <location>
        <begin position="53"/>
        <end position="55"/>
    </location>
</feature>
<feature type="strand" evidence="9">
    <location>
        <begin position="56"/>
        <end position="59"/>
    </location>
</feature>
<feature type="helix" evidence="9">
    <location>
        <begin position="67"/>
        <end position="84"/>
    </location>
</feature>
<feature type="helix" evidence="9">
    <location>
        <begin position="86"/>
        <end position="88"/>
    </location>
</feature>
<feature type="helix" evidence="9">
    <location>
        <begin position="94"/>
        <end position="97"/>
    </location>
</feature>
<feature type="strand" evidence="9">
    <location>
        <begin position="102"/>
        <end position="105"/>
    </location>
</feature>
<feature type="strand" evidence="9">
    <location>
        <begin position="108"/>
        <end position="111"/>
    </location>
</feature>
<feature type="helix" evidence="9">
    <location>
        <begin position="117"/>
        <end position="134"/>
    </location>
</feature>
<feature type="helix" evidence="9">
    <location>
        <begin position="140"/>
        <end position="142"/>
    </location>
</feature>
<feature type="helix" evidence="9">
    <location>
        <begin position="147"/>
        <end position="150"/>
    </location>
</feature>